<accession>Q31TP8</accession>
<proteinExistence type="inferred from homology"/>
<name>PHNC_SHIBS</name>
<dbReference type="EC" id="7.3.2.2" evidence="1"/>
<dbReference type="EMBL" id="CP000036">
    <property type="protein sequence ID" value="ABB68560.1"/>
    <property type="molecule type" value="Genomic_DNA"/>
</dbReference>
<dbReference type="RefSeq" id="WP_001193421.1">
    <property type="nucleotide sequence ID" value="NC_007613.1"/>
</dbReference>
<dbReference type="SMR" id="Q31TP8"/>
<dbReference type="KEGG" id="sbo:SBO_4131"/>
<dbReference type="HOGENOM" id="CLU_000604_1_22_6"/>
<dbReference type="Proteomes" id="UP000007067">
    <property type="component" value="Chromosome"/>
</dbReference>
<dbReference type="GO" id="GO:0005886">
    <property type="term" value="C:plasma membrane"/>
    <property type="evidence" value="ECO:0007669"/>
    <property type="project" value="UniProtKB-SubCell"/>
</dbReference>
<dbReference type="GO" id="GO:0015416">
    <property type="term" value="F:ABC-type phosphonate transporter activity"/>
    <property type="evidence" value="ECO:0007669"/>
    <property type="project" value="UniProtKB-EC"/>
</dbReference>
<dbReference type="GO" id="GO:0005524">
    <property type="term" value="F:ATP binding"/>
    <property type="evidence" value="ECO:0007669"/>
    <property type="project" value="UniProtKB-KW"/>
</dbReference>
<dbReference type="GO" id="GO:0016887">
    <property type="term" value="F:ATP hydrolysis activity"/>
    <property type="evidence" value="ECO:0007669"/>
    <property type="project" value="InterPro"/>
</dbReference>
<dbReference type="CDD" id="cd03256">
    <property type="entry name" value="ABC_PhnC_transporter"/>
    <property type="match status" value="1"/>
</dbReference>
<dbReference type="Gene3D" id="3.40.50.300">
    <property type="entry name" value="P-loop containing nucleotide triphosphate hydrolases"/>
    <property type="match status" value="1"/>
</dbReference>
<dbReference type="InterPro" id="IPR003593">
    <property type="entry name" value="AAA+_ATPase"/>
</dbReference>
<dbReference type="InterPro" id="IPR003439">
    <property type="entry name" value="ABC_transporter-like_ATP-bd"/>
</dbReference>
<dbReference type="InterPro" id="IPR017871">
    <property type="entry name" value="ABC_transporter-like_CS"/>
</dbReference>
<dbReference type="InterPro" id="IPR012693">
    <property type="entry name" value="ABC_transpr_PhnC"/>
</dbReference>
<dbReference type="InterPro" id="IPR050086">
    <property type="entry name" value="MetN_ABC_transporter-like"/>
</dbReference>
<dbReference type="InterPro" id="IPR027417">
    <property type="entry name" value="P-loop_NTPase"/>
</dbReference>
<dbReference type="NCBIfam" id="TIGR02315">
    <property type="entry name" value="ABC_phnC"/>
    <property type="match status" value="1"/>
</dbReference>
<dbReference type="NCBIfam" id="NF007438">
    <property type="entry name" value="PRK09984.1"/>
    <property type="match status" value="1"/>
</dbReference>
<dbReference type="PANTHER" id="PTHR43166">
    <property type="entry name" value="AMINO ACID IMPORT ATP-BINDING PROTEIN"/>
    <property type="match status" value="1"/>
</dbReference>
<dbReference type="PANTHER" id="PTHR43166:SF6">
    <property type="entry name" value="PHOSPHONATES IMPORT ATP-BINDING PROTEIN PHNC"/>
    <property type="match status" value="1"/>
</dbReference>
<dbReference type="Pfam" id="PF00005">
    <property type="entry name" value="ABC_tran"/>
    <property type="match status" value="1"/>
</dbReference>
<dbReference type="SMART" id="SM00382">
    <property type="entry name" value="AAA"/>
    <property type="match status" value="1"/>
</dbReference>
<dbReference type="SUPFAM" id="SSF52540">
    <property type="entry name" value="P-loop containing nucleoside triphosphate hydrolases"/>
    <property type="match status" value="1"/>
</dbReference>
<dbReference type="PROSITE" id="PS00211">
    <property type="entry name" value="ABC_TRANSPORTER_1"/>
    <property type="match status" value="1"/>
</dbReference>
<dbReference type="PROSITE" id="PS50893">
    <property type="entry name" value="ABC_TRANSPORTER_2"/>
    <property type="match status" value="1"/>
</dbReference>
<dbReference type="PROSITE" id="PS51249">
    <property type="entry name" value="PHNC"/>
    <property type="match status" value="1"/>
</dbReference>
<reference key="1">
    <citation type="journal article" date="2005" name="Nucleic Acids Res.">
        <title>Genome dynamics and diversity of Shigella species, the etiologic agents of bacillary dysentery.</title>
        <authorList>
            <person name="Yang F."/>
            <person name="Yang J."/>
            <person name="Zhang X."/>
            <person name="Chen L."/>
            <person name="Jiang Y."/>
            <person name="Yan Y."/>
            <person name="Tang X."/>
            <person name="Wang J."/>
            <person name="Xiong Z."/>
            <person name="Dong J."/>
            <person name="Xue Y."/>
            <person name="Zhu Y."/>
            <person name="Xu X."/>
            <person name="Sun L."/>
            <person name="Chen S."/>
            <person name="Nie H."/>
            <person name="Peng J."/>
            <person name="Xu J."/>
            <person name="Wang Y."/>
            <person name="Yuan Z."/>
            <person name="Wen Y."/>
            <person name="Yao Z."/>
            <person name="Shen Y."/>
            <person name="Qiang B."/>
            <person name="Hou Y."/>
            <person name="Yu J."/>
            <person name="Jin Q."/>
        </authorList>
    </citation>
    <scope>NUCLEOTIDE SEQUENCE [LARGE SCALE GENOMIC DNA]</scope>
    <source>
        <strain>Sb227</strain>
    </source>
</reference>
<keyword id="KW-0067">ATP-binding</keyword>
<keyword id="KW-0997">Cell inner membrane</keyword>
<keyword id="KW-1003">Cell membrane</keyword>
<keyword id="KW-0472">Membrane</keyword>
<keyword id="KW-0547">Nucleotide-binding</keyword>
<keyword id="KW-0918">Phosphonate transport</keyword>
<keyword id="KW-1278">Translocase</keyword>
<keyword id="KW-0813">Transport</keyword>
<organism>
    <name type="scientific">Shigella boydii serotype 4 (strain Sb227)</name>
    <dbReference type="NCBI Taxonomy" id="300268"/>
    <lineage>
        <taxon>Bacteria</taxon>
        <taxon>Pseudomonadati</taxon>
        <taxon>Pseudomonadota</taxon>
        <taxon>Gammaproteobacteria</taxon>
        <taxon>Enterobacterales</taxon>
        <taxon>Enterobacteriaceae</taxon>
        <taxon>Shigella</taxon>
    </lineage>
</organism>
<feature type="chain" id="PRO_0000274750" description="Phosphonates import ATP-binding protein PhnC">
    <location>
        <begin position="1"/>
        <end position="262"/>
    </location>
</feature>
<feature type="domain" description="ABC transporter" evidence="1">
    <location>
        <begin position="5"/>
        <end position="253"/>
    </location>
</feature>
<feature type="binding site" evidence="1">
    <location>
        <begin position="37"/>
        <end position="44"/>
    </location>
    <ligand>
        <name>ATP</name>
        <dbReference type="ChEBI" id="CHEBI:30616"/>
    </ligand>
</feature>
<protein>
    <recommendedName>
        <fullName evidence="1">Phosphonates import ATP-binding protein PhnC</fullName>
        <ecNumber evidence="1">7.3.2.2</ecNumber>
    </recommendedName>
</protein>
<evidence type="ECO:0000255" key="1">
    <source>
        <dbReference type="HAMAP-Rule" id="MF_01713"/>
    </source>
</evidence>
<gene>
    <name evidence="1" type="primary">phnC</name>
    <name type="ordered locus">SBO_4131</name>
</gene>
<comment type="function">
    <text evidence="1">Part of the ABC transporter complex PhnCDE involved in phosphonates import. Responsible for energy coupling to the transport system.</text>
</comment>
<comment type="catalytic activity">
    <reaction evidence="1">
        <text>phosphonate(out) + ATP + H2O = phosphonate(in) + ADP + phosphate + H(+)</text>
        <dbReference type="Rhea" id="RHEA:18065"/>
        <dbReference type="ChEBI" id="CHEBI:15377"/>
        <dbReference type="ChEBI" id="CHEBI:15378"/>
        <dbReference type="ChEBI" id="CHEBI:16215"/>
        <dbReference type="ChEBI" id="CHEBI:30616"/>
        <dbReference type="ChEBI" id="CHEBI:43474"/>
        <dbReference type="ChEBI" id="CHEBI:456216"/>
        <dbReference type="EC" id="7.3.2.2"/>
    </reaction>
</comment>
<comment type="subunit">
    <text evidence="1">The complex is composed of two ATP-binding proteins (PhnC), two transmembrane proteins (PhnE) and a solute-binding protein (PhnD).</text>
</comment>
<comment type="subcellular location">
    <subcellularLocation>
        <location evidence="1">Cell inner membrane</location>
        <topology evidence="1">Peripheral membrane protein</topology>
    </subcellularLocation>
</comment>
<comment type="similarity">
    <text evidence="1">Belongs to the ABC transporter superfamily. Phosphonates importer (TC 3.A.1.9.1) family.</text>
</comment>
<sequence>MQTIIRVEKLAKTFNQHQALHAVDLNIHHSEMVALLGPSGSGKSTLLRHLSGLITGDKSAGSHIELLGRTVQREGRLARDIRKSRAHTGYIFQQFNLVNRLSVLENVLIGALGSTPFWRTCFSWFTREQKQRALQALTRVGMVHFAHQRVSTLSGGQQQRVAIARALMQQAKVILADEPIASLDPESARIVMDTLRDINQNDGITVVVTLHQVDYALRYCERIVALRQGHVFYDGSSQQFDNERFDHLYRSINRIEENAKAA</sequence>